<protein>
    <recommendedName>
        <fullName evidence="1">ATP synthase gamma chain</fullName>
    </recommendedName>
    <alternativeName>
        <fullName evidence="1">ATP synthase F1 sector gamma subunit</fullName>
    </alternativeName>
    <alternativeName>
        <fullName evidence="1">F-ATPase gamma subunit</fullName>
    </alternativeName>
</protein>
<sequence>MPSLKDLRNRIASVKATQKITKAMQMVASAKLRRAQLAAEAARPYAERMDEVLASLASIVGTGPDAPKLLAGNGYDRTHLLVVCTAERGLCGGFNASIARLARDTAEKLIAEGKKVKILCVGKKGYDLLKRQFGEQILELIELRSVRTIGFVNAEAIGRKILNLYKDAEFDVCTLFFAKFRTVLHQIPTAQQLIPLAVKTQEDAPAAPPSLYEYEPSEEQILATLLPRNITIQVLRALLENAASEQGARMSAMDNASRNAGEMIKKQTLKYNRSRQAMITKELIEIISGAEAL</sequence>
<proteinExistence type="inferred from homology"/>
<evidence type="ECO:0000255" key="1">
    <source>
        <dbReference type="HAMAP-Rule" id="MF_00815"/>
    </source>
</evidence>
<organism>
    <name type="scientific">Beijerinckia indica subsp. indica (strain ATCC 9039 / DSM 1715 / NCIMB 8712)</name>
    <dbReference type="NCBI Taxonomy" id="395963"/>
    <lineage>
        <taxon>Bacteria</taxon>
        <taxon>Pseudomonadati</taxon>
        <taxon>Pseudomonadota</taxon>
        <taxon>Alphaproteobacteria</taxon>
        <taxon>Hyphomicrobiales</taxon>
        <taxon>Beijerinckiaceae</taxon>
        <taxon>Beijerinckia</taxon>
    </lineage>
</organism>
<comment type="function">
    <text evidence="1">Produces ATP from ADP in the presence of a proton gradient across the membrane. The gamma chain is believed to be important in regulating ATPase activity and the flow of protons through the CF(0) complex.</text>
</comment>
<comment type="subunit">
    <text evidence="1">F-type ATPases have 2 components, CF(1) - the catalytic core - and CF(0) - the membrane proton channel. CF(1) has five subunits: alpha(3), beta(3), gamma(1), delta(1), epsilon(1). CF(0) has three main subunits: a, b and c.</text>
</comment>
<comment type="subcellular location">
    <subcellularLocation>
        <location evidence="1">Cell inner membrane</location>
        <topology evidence="1">Peripheral membrane protein</topology>
    </subcellularLocation>
</comment>
<comment type="similarity">
    <text evidence="1">Belongs to the ATPase gamma chain family.</text>
</comment>
<keyword id="KW-0066">ATP synthesis</keyword>
<keyword id="KW-0997">Cell inner membrane</keyword>
<keyword id="KW-1003">Cell membrane</keyword>
<keyword id="KW-0139">CF(1)</keyword>
<keyword id="KW-0375">Hydrogen ion transport</keyword>
<keyword id="KW-0406">Ion transport</keyword>
<keyword id="KW-0472">Membrane</keyword>
<keyword id="KW-1185">Reference proteome</keyword>
<keyword id="KW-0813">Transport</keyword>
<feature type="chain" id="PRO_1000134113" description="ATP synthase gamma chain">
    <location>
        <begin position="1"/>
        <end position="293"/>
    </location>
</feature>
<accession>B2ICI6</accession>
<gene>
    <name evidence="1" type="primary">atpG</name>
    <name type="ordered locus">Bind_0219</name>
</gene>
<reference key="1">
    <citation type="journal article" date="2010" name="J. Bacteriol.">
        <title>Complete genome sequence of Beijerinckia indica subsp. indica.</title>
        <authorList>
            <person name="Tamas I."/>
            <person name="Dedysh S.N."/>
            <person name="Liesack W."/>
            <person name="Stott M.B."/>
            <person name="Alam M."/>
            <person name="Murrell J.C."/>
            <person name="Dunfield P.F."/>
        </authorList>
    </citation>
    <scope>NUCLEOTIDE SEQUENCE [LARGE SCALE GENOMIC DNA]</scope>
    <source>
        <strain>ATCC 9039 / DSM 1715 / NCIMB 8712</strain>
    </source>
</reference>
<dbReference type="EMBL" id="CP001016">
    <property type="protein sequence ID" value="ACB93875.1"/>
    <property type="molecule type" value="Genomic_DNA"/>
</dbReference>
<dbReference type="RefSeq" id="WP_012383233.1">
    <property type="nucleotide sequence ID" value="NC_010581.1"/>
</dbReference>
<dbReference type="SMR" id="B2ICI6"/>
<dbReference type="STRING" id="395963.Bind_0219"/>
<dbReference type="KEGG" id="bid:Bind_0219"/>
<dbReference type="eggNOG" id="COG0224">
    <property type="taxonomic scope" value="Bacteria"/>
</dbReference>
<dbReference type="HOGENOM" id="CLU_050669_0_1_5"/>
<dbReference type="OrthoDB" id="9812769at2"/>
<dbReference type="Proteomes" id="UP000001695">
    <property type="component" value="Chromosome"/>
</dbReference>
<dbReference type="GO" id="GO:0005886">
    <property type="term" value="C:plasma membrane"/>
    <property type="evidence" value="ECO:0007669"/>
    <property type="project" value="UniProtKB-SubCell"/>
</dbReference>
<dbReference type="GO" id="GO:0045259">
    <property type="term" value="C:proton-transporting ATP synthase complex"/>
    <property type="evidence" value="ECO:0007669"/>
    <property type="project" value="UniProtKB-KW"/>
</dbReference>
<dbReference type="GO" id="GO:0005524">
    <property type="term" value="F:ATP binding"/>
    <property type="evidence" value="ECO:0007669"/>
    <property type="project" value="UniProtKB-UniRule"/>
</dbReference>
<dbReference type="GO" id="GO:0046933">
    <property type="term" value="F:proton-transporting ATP synthase activity, rotational mechanism"/>
    <property type="evidence" value="ECO:0007669"/>
    <property type="project" value="UniProtKB-UniRule"/>
</dbReference>
<dbReference type="GO" id="GO:0042777">
    <property type="term" value="P:proton motive force-driven plasma membrane ATP synthesis"/>
    <property type="evidence" value="ECO:0007669"/>
    <property type="project" value="UniProtKB-UniRule"/>
</dbReference>
<dbReference type="CDD" id="cd12151">
    <property type="entry name" value="F1-ATPase_gamma"/>
    <property type="match status" value="1"/>
</dbReference>
<dbReference type="FunFam" id="1.10.287.80:FF:000001">
    <property type="entry name" value="ATP synthase gamma chain"/>
    <property type="match status" value="1"/>
</dbReference>
<dbReference type="FunFam" id="1.10.287.80:FF:000003">
    <property type="entry name" value="ATP synthase gamma chain, chloroplastic"/>
    <property type="match status" value="1"/>
</dbReference>
<dbReference type="Gene3D" id="3.40.1380.10">
    <property type="match status" value="1"/>
</dbReference>
<dbReference type="Gene3D" id="1.10.287.80">
    <property type="entry name" value="ATP synthase, gamma subunit, helix hairpin domain"/>
    <property type="match status" value="1"/>
</dbReference>
<dbReference type="HAMAP" id="MF_00815">
    <property type="entry name" value="ATP_synth_gamma_bact"/>
    <property type="match status" value="1"/>
</dbReference>
<dbReference type="InterPro" id="IPR035968">
    <property type="entry name" value="ATP_synth_F1_ATPase_gsu"/>
</dbReference>
<dbReference type="InterPro" id="IPR000131">
    <property type="entry name" value="ATP_synth_F1_gsu"/>
</dbReference>
<dbReference type="InterPro" id="IPR023632">
    <property type="entry name" value="ATP_synth_F1_gsu_CS"/>
</dbReference>
<dbReference type="NCBIfam" id="TIGR01146">
    <property type="entry name" value="ATPsyn_F1gamma"/>
    <property type="match status" value="1"/>
</dbReference>
<dbReference type="NCBIfam" id="NF004146">
    <property type="entry name" value="PRK05621.1-4"/>
    <property type="match status" value="1"/>
</dbReference>
<dbReference type="PANTHER" id="PTHR11693">
    <property type="entry name" value="ATP SYNTHASE GAMMA CHAIN"/>
    <property type="match status" value="1"/>
</dbReference>
<dbReference type="PANTHER" id="PTHR11693:SF22">
    <property type="entry name" value="ATP SYNTHASE SUBUNIT GAMMA, MITOCHONDRIAL"/>
    <property type="match status" value="1"/>
</dbReference>
<dbReference type="Pfam" id="PF00231">
    <property type="entry name" value="ATP-synt"/>
    <property type="match status" value="1"/>
</dbReference>
<dbReference type="PIRSF" id="PIRSF039089">
    <property type="entry name" value="ATP_synthase_gamma"/>
    <property type="match status" value="1"/>
</dbReference>
<dbReference type="PRINTS" id="PR00126">
    <property type="entry name" value="ATPASEGAMMA"/>
</dbReference>
<dbReference type="SUPFAM" id="SSF52943">
    <property type="entry name" value="ATP synthase (F1-ATPase), gamma subunit"/>
    <property type="match status" value="1"/>
</dbReference>
<dbReference type="PROSITE" id="PS00153">
    <property type="entry name" value="ATPASE_GAMMA"/>
    <property type="match status" value="1"/>
</dbReference>
<name>ATPG_BEII9</name>